<evidence type="ECO:0000255" key="1">
    <source>
        <dbReference type="HAMAP-Rule" id="MF_01850"/>
    </source>
</evidence>
<organism>
    <name type="scientific">Deinococcus radiodurans (strain ATCC 13939 / DSM 20539 / JCM 16871 / CCUG 27074 / LMG 4051 / NBRC 15346 / NCIMB 9279 / VKM B-1422 / R1)</name>
    <dbReference type="NCBI Taxonomy" id="243230"/>
    <lineage>
        <taxon>Bacteria</taxon>
        <taxon>Thermotogati</taxon>
        <taxon>Deinococcota</taxon>
        <taxon>Deinococci</taxon>
        <taxon>Deinococcales</taxon>
        <taxon>Deinococcaceae</taxon>
        <taxon>Deinococcus</taxon>
    </lineage>
</organism>
<feature type="chain" id="PRO_0000348710" description="tRNA-cytidine(32) 2-sulfurtransferase">
    <location>
        <begin position="1"/>
        <end position="299"/>
    </location>
</feature>
<feature type="short sequence motif" description="PP-loop motif" evidence="1">
    <location>
        <begin position="49"/>
        <end position="54"/>
    </location>
</feature>
<feature type="binding site" evidence="1">
    <location>
        <position position="124"/>
    </location>
    <ligand>
        <name>[4Fe-4S] cluster</name>
        <dbReference type="ChEBI" id="CHEBI:49883"/>
    </ligand>
</feature>
<feature type="binding site" evidence="1">
    <location>
        <position position="127"/>
    </location>
    <ligand>
        <name>[4Fe-4S] cluster</name>
        <dbReference type="ChEBI" id="CHEBI:49883"/>
    </ligand>
</feature>
<feature type="binding site" evidence="1">
    <location>
        <position position="215"/>
    </location>
    <ligand>
        <name>[4Fe-4S] cluster</name>
        <dbReference type="ChEBI" id="CHEBI:49883"/>
    </ligand>
</feature>
<accession>Q9RX35</accession>
<name>TTCA_DEIRA</name>
<gene>
    <name evidence="1" type="primary">ttcA</name>
    <name type="ordered locus">DR_0480</name>
</gene>
<keyword id="KW-0004">4Fe-4S</keyword>
<keyword id="KW-0067">ATP-binding</keyword>
<keyword id="KW-0963">Cytoplasm</keyword>
<keyword id="KW-0408">Iron</keyword>
<keyword id="KW-0411">Iron-sulfur</keyword>
<keyword id="KW-0460">Magnesium</keyword>
<keyword id="KW-0479">Metal-binding</keyword>
<keyword id="KW-0547">Nucleotide-binding</keyword>
<keyword id="KW-1185">Reference proteome</keyword>
<keyword id="KW-0694">RNA-binding</keyword>
<keyword id="KW-0808">Transferase</keyword>
<keyword id="KW-0819">tRNA processing</keyword>
<keyword id="KW-0820">tRNA-binding</keyword>
<proteinExistence type="inferred from homology"/>
<comment type="function">
    <text evidence="1">Catalyzes the ATP-dependent 2-thiolation of cytidine in position 32 of tRNA, to form 2-thiocytidine (s(2)C32). The sulfur atoms are provided by the cysteine/cysteine desulfurase (IscS) system.</text>
</comment>
<comment type="catalytic activity">
    <reaction evidence="1">
        <text>cytidine(32) in tRNA + S-sulfanyl-L-cysteinyl-[cysteine desulfurase] + AH2 + ATP = 2-thiocytidine(32) in tRNA + L-cysteinyl-[cysteine desulfurase] + A + AMP + diphosphate + H(+)</text>
        <dbReference type="Rhea" id="RHEA:57048"/>
        <dbReference type="Rhea" id="RHEA-COMP:10288"/>
        <dbReference type="Rhea" id="RHEA-COMP:12157"/>
        <dbReference type="Rhea" id="RHEA-COMP:12158"/>
        <dbReference type="Rhea" id="RHEA-COMP:14821"/>
        <dbReference type="ChEBI" id="CHEBI:13193"/>
        <dbReference type="ChEBI" id="CHEBI:15378"/>
        <dbReference type="ChEBI" id="CHEBI:17499"/>
        <dbReference type="ChEBI" id="CHEBI:29950"/>
        <dbReference type="ChEBI" id="CHEBI:30616"/>
        <dbReference type="ChEBI" id="CHEBI:33019"/>
        <dbReference type="ChEBI" id="CHEBI:61963"/>
        <dbReference type="ChEBI" id="CHEBI:82748"/>
        <dbReference type="ChEBI" id="CHEBI:141453"/>
        <dbReference type="ChEBI" id="CHEBI:456215"/>
    </reaction>
    <physiologicalReaction direction="left-to-right" evidence="1">
        <dbReference type="Rhea" id="RHEA:57049"/>
    </physiologicalReaction>
</comment>
<comment type="cofactor">
    <cofactor evidence="1">
        <name>Mg(2+)</name>
        <dbReference type="ChEBI" id="CHEBI:18420"/>
    </cofactor>
</comment>
<comment type="cofactor">
    <cofactor evidence="1">
        <name>[4Fe-4S] cluster</name>
        <dbReference type="ChEBI" id="CHEBI:49883"/>
    </cofactor>
    <text evidence="1">Binds 1 [4Fe-4S] cluster per subunit. The cluster is chelated by three Cys residues, the fourth Fe has a free coordination site that may bind a sulfur atom transferred from the persulfide of IscS.</text>
</comment>
<comment type="pathway">
    <text evidence="1">tRNA modification.</text>
</comment>
<comment type="subunit">
    <text evidence="1">Homodimer.</text>
</comment>
<comment type="subcellular location">
    <subcellularLocation>
        <location evidence="1">Cytoplasm</location>
    </subcellularLocation>
</comment>
<comment type="miscellaneous">
    <text evidence="1">The thiolation reaction likely consists of two steps: a first activation step by ATP to form an adenylated intermediate of the target base of tRNA, and a second nucleophilic substitution step of the sulfur (S) atom supplied by the hydrosulfide attached to the Fe-S cluster.</text>
</comment>
<comment type="similarity">
    <text evidence="1">Belongs to the TtcA family.</text>
</comment>
<reference key="1">
    <citation type="journal article" date="1999" name="Science">
        <title>Genome sequence of the radioresistant bacterium Deinococcus radiodurans R1.</title>
        <authorList>
            <person name="White O."/>
            <person name="Eisen J.A."/>
            <person name="Heidelberg J.F."/>
            <person name="Hickey E.K."/>
            <person name="Peterson J.D."/>
            <person name="Dodson R.J."/>
            <person name="Haft D.H."/>
            <person name="Gwinn M.L."/>
            <person name="Nelson W.C."/>
            <person name="Richardson D.L."/>
            <person name="Moffat K.S."/>
            <person name="Qin H."/>
            <person name="Jiang L."/>
            <person name="Pamphile W."/>
            <person name="Crosby M."/>
            <person name="Shen M."/>
            <person name="Vamathevan J.J."/>
            <person name="Lam P."/>
            <person name="McDonald L.A."/>
            <person name="Utterback T.R."/>
            <person name="Zalewski C."/>
            <person name="Makarova K.S."/>
            <person name="Aravind L."/>
            <person name="Daly M.J."/>
            <person name="Minton K.W."/>
            <person name="Fleischmann R.D."/>
            <person name="Ketchum K.A."/>
            <person name="Nelson K.E."/>
            <person name="Salzberg S.L."/>
            <person name="Smith H.O."/>
            <person name="Venter J.C."/>
            <person name="Fraser C.M."/>
        </authorList>
    </citation>
    <scope>NUCLEOTIDE SEQUENCE [LARGE SCALE GENOMIC DNA]</scope>
    <source>
        <strain>ATCC 13939 / DSM 20539 / JCM 16871 / CCUG 27074 / LMG 4051 / NBRC 15346 / NCIMB 9279 / VKM B-1422 / R1</strain>
    </source>
</reference>
<protein>
    <recommendedName>
        <fullName evidence="1">tRNA-cytidine(32) 2-sulfurtransferase</fullName>
        <ecNumber evidence="1">2.8.1.-</ecNumber>
    </recommendedName>
    <alternativeName>
        <fullName evidence="1">Two-thiocytidine biosynthesis protein A</fullName>
    </alternativeName>
    <alternativeName>
        <fullName evidence="1">tRNA 2-thiocytidine biosynthesis protein TtcA</fullName>
    </alternativeName>
</protein>
<dbReference type="EC" id="2.8.1.-" evidence="1"/>
<dbReference type="EMBL" id="AE000513">
    <property type="protein sequence ID" value="AAF10060.1"/>
    <property type="molecule type" value="Genomic_DNA"/>
</dbReference>
<dbReference type="PIR" id="C75514">
    <property type="entry name" value="C75514"/>
</dbReference>
<dbReference type="RefSeq" id="NP_294203.1">
    <property type="nucleotide sequence ID" value="NC_001263.1"/>
</dbReference>
<dbReference type="RefSeq" id="WP_010887125.1">
    <property type="nucleotide sequence ID" value="NC_001263.1"/>
</dbReference>
<dbReference type="SMR" id="Q9RX35"/>
<dbReference type="STRING" id="243230.DR_0480"/>
<dbReference type="PaxDb" id="243230-DR_0480"/>
<dbReference type="EnsemblBacteria" id="AAF10060">
    <property type="protein sequence ID" value="AAF10060"/>
    <property type="gene ID" value="DR_0480"/>
</dbReference>
<dbReference type="GeneID" id="69516716"/>
<dbReference type="KEGG" id="dra:DR_0480"/>
<dbReference type="PATRIC" id="fig|243230.17.peg.659"/>
<dbReference type="eggNOG" id="COG0037">
    <property type="taxonomic scope" value="Bacteria"/>
</dbReference>
<dbReference type="HOGENOM" id="CLU_026481_0_0_0"/>
<dbReference type="InParanoid" id="Q9RX35"/>
<dbReference type="OrthoDB" id="9801054at2"/>
<dbReference type="Proteomes" id="UP000002524">
    <property type="component" value="Chromosome 1"/>
</dbReference>
<dbReference type="GO" id="GO:0005829">
    <property type="term" value="C:cytosol"/>
    <property type="evidence" value="ECO:0000318"/>
    <property type="project" value="GO_Central"/>
</dbReference>
<dbReference type="GO" id="GO:0051539">
    <property type="term" value="F:4 iron, 4 sulfur cluster binding"/>
    <property type="evidence" value="ECO:0007669"/>
    <property type="project" value="UniProtKB-UniRule"/>
</dbReference>
<dbReference type="GO" id="GO:0005524">
    <property type="term" value="F:ATP binding"/>
    <property type="evidence" value="ECO:0007669"/>
    <property type="project" value="UniProtKB-UniRule"/>
</dbReference>
<dbReference type="GO" id="GO:0000287">
    <property type="term" value="F:magnesium ion binding"/>
    <property type="evidence" value="ECO:0007669"/>
    <property type="project" value="UniProtKB-UniRule"/>
</dbReference>
<dbReference type="GO" id="GO:0016783">
    <property type="term" value="F:sulfurtransferase activity"/>
    <property type="evidence" value="ECO:0000318"/>
    <property type="project" value="GO_Central"/>
</dbReference>
<dbReference type="GO" id="GO:0000049">
    <property type="term" value="F:tRNA binding"/>
    <property type="evidence" value="ECO:0007669"/>
    <property type="project" value="UniProtKB-KW"/>
</dbReference>
<dbReference type="GO" id="GO:0034227">
    <property type="term" value="P:tRNA thio-modification"/>
    <property type="evidence" value="ECO:0000318"/>
    <property type="project" value="GO_Central"/>
</dbReference>
<dbReference type="CDD" id="cd24138">
    <property type="entry name" value="TtcA-like"/>
    <property type="match status" value="1"/>
</dbReference>
<dbReference type="Gene3D" id="3.40.50.620">
    <property type="entry name" value="HUPs"/>
    <property type="match status" value="1"/>
</dbReference>
<dbReference type="HAMAP" id="MF_01850">
    <property type="entry name" value="TtcA"/>
    <property type="match status" value="1"/>
</dbReference>
<dbReference type="InterPro" id="IPR014729">
    <property type="entry name" value="Rossmann-like_a/b/a_fold"/>
</dbReference>
<dbReference type="InterPro" id="IPR011063">
    <property type="entry name" value="TilS/TtcA_N"/>
</dbReference>
<dbReference type="InterPro" id="IPR012089">
    <property type="entry name" value="tRNA_Cyd_32_2_STrfase"/>
</dbReference>
<dbReference type="InterPro" id="IPR035107">
    <property type="entry name" value="tRNA_thiolation_TtcA_Ctu1"/>
</dbReference>
<dbReference type="NCBIfam" id="NF007972">
    <property type="entry name" value="PRK10696.1"/>
    <property type="match status" value="1"/>
</dbReference>
<dbReference type="PANTHER" id="PTHR43686:SF1">
    <property type="entry name" value="AMINOTRAN_5 DOMAIN-CONTAINING PROTEIN"/>
    <property type="match status" value="1"/>
</dbReference>
<dbReference type="PANTHER" id="PTHR43686">
    <property type="entry name" value="SULFURTRANSFERASE-RELATED"/>
    <property type="match status" value="1"/>
</dbReference>
<dbReference type="Pfam" id="PF01171">
    <property type="entry name" value="ATP_bind_3"/>
    <property type="match status" value="1"/>
</dbReference>
<dbReference type="PIRSF" id="PIRSF004976">
    <property type="entry name" value="ATPase_YdaO"/>
    <property type="match status" value="1"/>
</dbReference>
<dbReference type="SUPFAM" id="SSF52402">
    <property type="entry name" value="Adenine nucleotide alpha hydrolases-like"/>
    <property type="match status" value="1"/>
</dbReference>
<sequence>MTQALTPTVSNTAQPDPARLLAPIVRQVGQAIGDYRMIEQGDRVMVCLSGGKDSYTLLDVLLHLQKKAPIDFEVVAVNLDQGQPGFPKDVLPRYLTALGVRHDILTEDTYSVVKEKTPEGKTTCSLCSRLRRGILYQHAREIGATKIALGHHREDILETLFMNMFFGARLKAMPPKLQSDDGTNVVIRPLAYVAEADIIRYAQAREFPVIPCNLCGAQPNLQRKVVGDMLEGWEREHPGRLNNILRSLTRVTPSHLLDRELYDFASLSVTPAQGDTGFDAESFPEREFMAGLSELSLLQ</sequence>